<dbReference type="EC" id="2.3.1.-"/>
<dbReference type="EMBL" id="AF027868">
    <property type="protein sequence ID" value="AAB84468.1"/>
    <property type="molecule type" value="Genomic_DNA"/>
</dbReference>
<dbReference type="EMBL" id="AL009126">
    <property type="protein sequence ID" value="CAB13798.1"/>
    <property type="molecule type" value="Genomic_DNA"/>
</dbReference>
<dbReference type="PIR" id="H69899">
    <property type="entry name" value="H69899"/>
</dbReference>
<dbReference type="RefSeq" id="NP_389787.1">
    <property type="nucleotide sequence ID" value="NC_000964.3"/>
</dbReference>
<dbReference type="RefSeq" id="WP_003231298.1">
    <property type="nucleotide sequence ID" value="NZ_OZ025638.1"/>
</dbReference>
<dbReference type="SMR" id="O34376"/>
<dbReference type="FunCoup" id="O34376">
    <property type="interactions" value="16"/>
</dbReference>
<dbReference type="STRING" id="224308.BSU19060"/>
<dbReference type="PaxDb" id="224308-BSU19060"/>
<dbReference type="EnsemblBacteria" id="CAB13798">
    <property type="protein sequence ID" value="CAB13798"/>
    <property type="gene ID" value="BSU_19060"/>
</dbReference>
<dbReference type="GeneID" id="939650"/>
<dbReference type="KEGG" id="bsu:BSU19060"/>
<dbReference type="PATRIC" id="fig|224308.179.peg.2084"/>
<dbReference type="eggNOG" id="COG0456">
    <property type="taxonomic scope" value="Bacteria"/>
</dbReference>
<dbReference type="InParanoid" id="O34376"/>
<dbReference type="OrthoDB" id="9805924at2"/>
<dbReference type="PhylomeDB" id="O34376"/>
<dbReference type="BioCyc" id="BSUB:BSU19060-MONOMER"/>
<dbReference type="Proteomes" id="UP000001570">
    <property type="component" value="Chromosome"/>
</dbReference>
<dbReference type="GO" id="GO:0016747">
    <property type="term" value="F:acyltransferase activity, transferring groups other than amino-acyl groups"/>
    <property type="evidence" value="ECO:0000318"/>
    <property type="project" value="GO_Central"/>
</dbReference>
<dbReference type="CDD" id="cd04301">
    <property type="entry name" value="NAT_SF"/>
    <property type="match status" value="1"/>
</dbReference>
<dbReference type="Gene3D" id="3.40.630.30">
    <property type="match status" value="1"/>
</dbReference>
<dbReference type="InterPro" id="IPR016181">
    <property type="entry name" value="Acyl_CoA_acyltransferase"/>
</dbReference>
<dbReference type="InterPro" id="IPR000182">
    <property type="entry name" value="GNAT_dom"/>
</dbReference>
<dbReference type="InterPro" id="IPR050276">
    <property type="entry name" value="MshD_Acetyltransferase"/>
</dbReference>
<dbReference type="InterPro" id="IPR056935">
    <property type="entry name" value="Rv0428c-like_C"/>
</dbReference>
<dbReference type="PANTHER" id="PTHR43617">
    <property type="entry name" value="L-AMINO ACID N-ACETYLTRANSFERASE"/>
    <property type="match status" value="1"/>
</dbReference>
<dbReference type="PANTHER" id="PTHR43617:SF22">
    <property type="entry name" value="L-AMINO ACID N-ACETYLTRANSFERASE AAAT"/>
    <property type="match status" value="1"/>
</dbReference>
<dbReference type="Pfam" id="PF24553">
    <property type="entry name" value="Rv0428c_C"/>
    <property type="match status" value="1"/>
</dbReference>
<dbReference type="SUPFAM" id="SSF55729">
    <property type="entry name" value="Acyl-CoA N-acyltransferases (Nat)"/>
    <property type="match status" value="1"/>
</dbReference>
<dbReference type="PROSITE" id="PS51186">
    <property type="entry name" value="GNAT"/>
    <property type="match status" value="1"/>
</dbReference>
<proteinExistence type="inferred from homology"/>
<evidence type="ECO:0000255" key="1">
    <source>
        <dbReference type="PROSITE-ProRule" id="PRU00532"/>
    </source>
</evidence>
<evidence type="ECO:0000305" key="2"/>
<accession>O34376</accession>
<accession>Q796D7</accession>
<feature type="chain" id="PRO_0000360811" description="Uncharacterized N-acetyltransferase YobR">
    <location>
        <begin position="1"/>
        <end position="247"/>
    </location>
</feature>
<feature type="domain" description="N-acetyltransferase" evidence="1">
    <location>
        <begin position="102"/>
        <end position="247"/>
    </location>
</feature>
<gene>
    <name type="primary">yobR</name>
    <name type="ordered locus">BSU19060</name>
</gene>
<sequence>MDDIRKIERLAAASWPAYFQKSIGKWLLRANFGVTKRANSVWTSADMPEGDFQLEAELFYQSLGLPVCFHISNASPKGLDDALADSRYEKVDECFQMTALCRSIMSRTNDNSRFTYKWEQEPSSVWIDEFIQLEGFSPERHKGYKHIFERMPPCKTFFKMYDKESLTALGTVSVIDGYGGLSNIVVAEEHRGKGAGTQVIRVLTEWAKNNGAERMFLQVMKENLAAVSLYGKIGFSPISEHHYRIKR</sequence>
<keyword id="KW-0012">Acyltransferase</keyword>
<keyword id="KW-1185">Reference proteome</keyword>
<keyword id="KW-0808">Transferase</keyword>
<reference key="1">
    <citation type="submission" date="1997-11" db="EMBL/GenBank/DDBJ databases">
        <title>Sequence analysis of the Bacillus subtilis chromosome region between the terC and odhAB loci cloned in a yeast artificial chromosome.</title>
        <authorList>
            <person name="Lapidus A."/>
            <person name="Galleron N."/>
            <person name="Sorokin A."/>
            <person name="Ehrlich S.D."/>
        </authorList>
    </citation>
    <scope>NUCLEOTIDE SEQUENCE [GENOMIC DNA]</scope>
</reference>
<reference key="2">
    <citation type="journal article" date="1997" name="Nature">
        <title>The complete genome sequence of the Gram-positive bacterium Bacillus subtilis.</title>
        <authorList>
            <person name="Kunst F."/>
            <person name="Ogasawara N."/>
            <person name="Moszer I."/>
            <person name="Albertini A.M."/>
            <person name="Alloni G."/>
            <person name="Azevedo V."/>
            <person name="Bertero M.G."/>
            <person name="Bessieres P."/>
            <person name="Bolotin A."/>
            <person name="Borchert S."/>
            <person name="Borriss R."/>
            <person name="Boursier L."/>
            <person name="Brans A."/>
            <person name="Braun M."/>
            <person name="Brignell S.C."/>
            <person name="Bron S."/>
            <person name="Brouillet S."/>
            <person name="Bruschi C.V."/>
            <person name="Caldwell B."/>
            <person name="Capuano V."/>
            <person name="Carter N.M."/>
            <person name="Choi S.-K."/>
            <person name="Codani J.-J."/>
            <person name="Connerton I.F."/>
            <person name="Cummings N.J."/>
            <person name="Daniel R.A."/>
            <person name="Denizot F."/>
            <person name="Devine K.M."/>
            <person name="Duesterhoeft A."/>
            <person name="Ehrlich S.D."/>
            <person name="Emmerson P.T."/>
            <person name="Entian K.-D."/>
            <person name="Errington J."/>
            <person name="Fabret C."/>
            <person name="Ferrari E."/>
            <person name="Foulger D."/>
            <person name="Fritz C."/>
            <person name="Fujita M."/>
            <person name="Fujita Y."/>
            <person name="Fuma S."/>
            <person name="Galizzi A."/>
            <person name="Galleron N."/>
            <person name="Ghim S.-Y."/>
            <person name="Glaser P."/>
            <person name="Goffeau A."/>
            <person name="Golightly E.J."/>
            <person name="Grandi G."/>
            <person name="Guiseppi G."/>
            <person name="Guy B.J."/>
            <person name="Haga K."/>
            <person name="Haiech J."/>
            <person name="Harwood C.R."/>
            <person name="Henaut A."/>
            <person name="Hilbert H."/>
            <person name="Holsappel S."/>
            <person name="Hosono S."/>
            <person name="Hullo M.-F."/>
            <person name="Itaya M."/>
            <person name="Jones L.-M."/>
            <person name="Joris B."/>
            <person name="Karamata D."/>
            <person name="Kasahara Y."/>
            <person name="Klaerr-Blanchard M."/>
            <person name="Klein C."/>
            <person name="Kobayashi Y."/>
            <person name="Koetter P."/>
            <person name="Koningstein G."/>
            <person name="Krogh S."/>
            <person name="Kumano M."/>
            <person name="Kurita K."/>
            <person name="Lapidus A."/>
            <person name="Lardinois S."/>
            <person name="Lauber J."/>
            <person name="Lazarevic V."/>
            <person name="Lee S.-M."/>
            <person name="Levine A."/>
            <person name="Liu H."/>
            <person name="Masuda S."/>
            <person name="Mauel C."/>
            <person name="Medigue C."/>
            <person name="Medina N."/>
            <person name="Mellado R.P."/>
            <person name="Mizuno M."/>
            <person name="Moestl D."/>
            <person name="Nakai S."/>
            <person name="Noback M."/>
            <person name="Noone D."/>
            <person name="O'Reilly M."/>
            <person name="Ogawa K."/>
            <person name="Ogiwara A."/>
            <person name="Oudega B."/>
            <person name="Park S.-H."/>
            <person name="Parro V."/>
            <person name="Pohl T.M."/>
            <person name="Portetelle D."/>
            <person name="Porwollik S."/>
            <person name="Prescott A.M."/>
            <person name="Presecan E."/>
            <person name="Pujic P."/>
            <person name="Purnelle B."/>
            <person name="Rapoport G."/>
            <person name="Rey M."/>
            <person name="Reynolds S."/>
            <person name="Rieger M."/>
            <person name="Rivolta C."/>
            <person name="Rocha E."/>
            <person name="Roche B."/>
            <person name="Rose M."/>
            <person name="Sadaie Y."/>
            <person name="Sato T."/>
            <person name="Scanlan E."/>
            <person name="Schleich S."/>
            <person name="Schroeter R."/>
            <person name="Scoffone F."/>
            <person name="Sekiguchi J."/>
            <person name="Sekowska A."/>
            <person name="Seror S.J."/>
            <person name="Serror P."/>
            <person name="Shin B.-S."/>
            <person name="Soldo B."/>
            <person name="Sorokin A."/>
            <person name="Tacconi E."/>
            <person name="Takagi T."/>
            <person name="Takahashi H."/>
            <person name="Takemaru K."/>
            <person name="Takeuchi M."/>
            <person name="Tamakoshi A."/>
            <person name="Tanaka T."/>
            <person name="Terpstra P."/>
            <person name="Tognoni A."/>
            <person name="Tosato V."/>
            <person name="Uchiyama S."/>
            <person name="Vandenbol M."/>
            <person name="Vannier F."/>
            <person name="Vassarotti A."/>
            <person name="Viari A."/>
            <person name="Wambutt R."/>
            <person name="Wedler E."/>
            <person name="Wedler H."/>
            <person name="Weitzenegger T."/>
            <person name="Winters P."/>
            <person name="Wipat A."/>
            <person name="Yamamoto H."/>
            <person name="Yamane K."/>
            <person name="Yasumoto K."/>
            <person name="Yata K."/>
            <person name="Yoshida K."/>
            <person name="Yoshikawa H.-F."/>
            <person name="Zumstein E."/>
            <person name="Yoshikawa H."/>
            <person name="Danchin A."/>
        </authorList>
    </citation>
    <scope>NUCLEOTIDE SEQUENCE [LARGE SCALE GENOMIC DNA]</scope>
    <source>
        <strain>168</strain>
    </source>
</reference>
<organism>
    <name type="scientific">Bacillus subtilis (strain 168)</name>
    <dbReference type="NCBI Taxonomy" id="224308"/>
    <lineage>
        <taxon>Bacteria</taxon>
        <taxon>Bacillati</taxon>
        <taxon>Bacillota</taxon>
        <taxon>Bacilli</taxon>
        <taxon>Bacillales</taxon>
        <taxon>Bacillaceae</taxon>
        <taxon>Bacillus</taxon>
    </lineage>
</organism>
<protein>
    <recommendedName>
        <fullName>Uncharacterized N-acetyltransferase YobR</fullName>
        <ecNumber>2.3.1.-</ecNumber>
    </recommendedName>
</protein>
<comment type="similarity">
    <text evidence="2">Belongs to the acetyltransferase family.</text>
</comment>
<name>YOBR_BACSU</name>